<name>CASK_NEMGO</name>
<protein>
    <recommendedName>
        <fullName>Kappa-casein</fullName>
    </recommendedName>
</protein>
<dbReference type="EMBL" id="D32179">
    <property type="protein sequence ID" value="BAA06884.1"/>
    <property type="molecule type" value="Genomic_DNA"/>
</dbReference>
<dbReference type="GlyCosmos" id="P50422">
    <property type="glycosylation" value="8 sites, No reported glycans"/>
</dbReference>
<dbReference type="GO" id="GO:0005615">
    <property type="term" value="C:extracellular space"/>
    <property type="evidence" value="ECO:0007669"/>
    <property type="project" value="TreeGrafter"/>
</dbReference>
<dbReference type="GO" id="GO:0007595">
    <property type="term" value="P:lactation"/>
    <property type="evidence" value="ECO:0007669"/>
    <property type="project" value="TreeGrafter"/>
</dbReference>
<dbReference type="GO" id="GO:0050821">
    <property type="term" value="P:protein stabilization"/>
    <property type="evidence" value="ECO:0007669"/>
    <property type="project" value="TreeGrafter"/>
</dbReference>
<dbReference type="InterPro" id="IPR000117">
    <property type="entry name" value="Casein_kappa"/>
</dbReference>
<dbReference type="PANTHER" id="PTHR11470">
    <property type="entry name" value="KAPPA CASEIN"/>
    <property type="match status" value="1"/>
</dbReference>
<dbReference type="PANTHER" id="PTHR11470:SF2">
    <property type="entry name" value="KAPPA-CASEIN"/>
    <property type="match status" value="1"/>
</dbReference>
<dbReference type="Pfam" id="PF00997">
    <property type="entry name" value="Casein_kappa"/>
    <property type="match status" value="1"/>
</dbReference>
<dbReference type="PIRSF" id="PIRSF002374">
    <property type="entry name" value="Casein_kappa"/>
    <property type="match status" value="1"/>
</dbReference>
<accession>P50422</accession>
<feature type="signal peptide" evidence="1">
    <location>
        <begin position="1"/>
        <end position="21"/>
    </location>
</feature>
<feature type="chain" id="PRO_0000004500" description="Kappa-casein">
    <location>
        <begin position="22"/>
        <end position="192"/>
    </location>
</feature>
<feature type="region of interest" description="Disordered" evidence="4">
    <location>
        <begin position="166"/>
        <end position="192"/>
    </location>
</feature>
<feature type="compositionally biased region" description="Low complexity" evidence="4">
    <location>
        <begin position="169"/>
        <end position="181"/>
    </location>
</feature>
<feature type="compositionally biased region" description="Polar residues" evidence="4">
    <location>
        <begin position="182"/>
        <end position="192"/>
    </location>
</feature>
<feature type="site" description="Cleavage; by chymosin/rennin" evidence="1">
    <location>
        <begin position="126"/>
        <end position="127"/>
    </location>
</feature>
<feature type="modified residue" description="Phosphoserine" evidence="2">
    <location>
        <position position="148"/>
    </location>
</feature>
<feature type="modified residue" description="Phosphoserine; alternate" evidence="2">
    <location>
        <position position="172"/>
    </location>
</feature>
<feature type="modified residue" description="Phosphoserine" evidence="3">
    <location>
        <position position="189"/>
    </location>
</feature>
<feature type="glycosylation site" description="O-linked (GalNAc...) threonine" evidence="2">
    <location>
        <position position="142"/>
    </location>
</feature>
<feature type="glycosylation site" description="O-linked (GalNAc...) threonine" evidence="2">
    <location>
        <position position="152"/>
    </location>
</feature>
<feature type="glycosylation site" description="O-linked (GalNAc...) serine" evidence="2">
    <location>
        <position position="155"/>
    </location>
</feature>
<feature type="glycosylation site" description="O-linked (GalNAc...) threonine" evidence="2">
    <location>
        <position position="156"/>
    </location>
</feature>
<feature type="glycosylation site" description="O-linked (GalNAc...) threonine" evidence="2">
    <location>
        <position position="159"/>
    </location>
</feature>
<feature type="glycosylation site" description="O-linked (GalNAc...) threonine" evidence="2">
    <location>
        <position position="165"/>
    </location>
</feature>
<feature type="glycosylation site" description="O-linked (GalNAc...) serine; alternate" evidence="2">
    <location>
        <position position="172"/>
    </location>
</feature>
<feature type="glycosylation site" description="O-linked (GalNAc...) threonine" evidence="2">
    <location>
        <position position="188"/>
    </location>
</feature>
<organism>
    <name type="scientific">Naemorhedus goral</name>
    <name type="common">Himalayan goral</name>
    <dbReference type="NCBI Taxonomy" id="34871"/>
    <lineage>
        <taxon>Eukaryota</taxon>
        <taxon>Metazoa</taxon>
        <taxon>Chordata</taxon>
        <taxon>Craniata</taxon>
        <taxon>Vertebrata</taxon>
        <taxon>Euteleostomi</taxon>
        <taxon>Mammalia</taxon>
        <taxon>Eutheria</taxon>
        <taxon>Laurasiatheria</taxon>
        <taxon>Artiodactyla</taxon>
        <taxon>Ruminantia</taxon>
        <taxon>Pecora</taxon>
        <taxon>Bovidae</taxon>
        <taxon>Caprinae</taxon>
        <taxon>Naemorhedus</taxon>
    </lineage>
</organism>
<keyword id="KW-0325">Glycoprotein</keyword>
<keyword id="KW-0494">Milk protein</keyword>
<keyword id="KW-0597">Phosphoprotein</keyword>
<keyword id="KW-0964">Secreted</keyword>
<keyword id="KW-0732">Signal</keyword>
<evidence type="ECO:0000250" key="1"/>
<evidence type="ECO:0000250" key="2">
    <source>
        <dbReference type="UniProtKB" id="P02668"/>
    </source>
</evidence>
<evidence type="ECO:0000250" key="3">
    <source>
        <dbReference type="UniProtKB" id="P02670"/>
    </source>
</evidence>
<evidence type="ECO:0000256" key="4">
    <source>
        <dbReference type="SAM" id="MobiDB-lite"/>
    </source>
</evidence>
<evidence type="ECO:0000305" key="5"/>
<gene>
    <name type="primary">CSN3</name>
    <name type="synonym">CSN10</name>
    <name type="synonym">CSNK</name>
</gene>
<comment type="function">
    <text>Kappa-casein stabilizes micelle formation, preventing casein precipitation in milk.</text>
</comment>
<comment type="subcellular location">
    <subcellularLocation>
        <location>Secreted</location>
    </subcellularLocation>
</comment>
<comment type="tissue specificity">
    <text>Mammary gland specific. Secreted in milk.</text>
</comment>
<comment type="similarity">
    <text evidence="5">Belongs to the kappa-casein family.</text>
</comment>
<sequence>MMKSFFLVVTILALTLPFLGAQEQNQEQPICCEKDERFFDDKIAKYIPIQYVLSRYPSYGLNYYQQRPVALINNQFLPYPYYAKPVAVRSPAQTLQWQVLPNTAPAKSCQDQPTTMARHPHPHLSFMAIPPKKDQDKTEIPTINTIASAEPTVHSTPTTEAIVNTVDNPEASSESIASAPETNTAQVTSTEV</sequence>
<reference key="1">
    <citation type="journal article" date="1995" name="J. Mol. Evol.">
        <title>Molecular phylogeny based on the kappa-casein and cytochrome b sequences in the mammalian suborder ruminantia.</title>
        <authorList>
            <person name="Chikuni K."/>
            <person name="Mori Y."/>
            <person name="Tabata T."/>
            <person name="Saito M."/>
            <person name="Monma M."/>
            <person name="Kosugiyama M."/>
        </authorList>
    </citation>
    <scope>NUCLEOTIDE SEQUENCE [GENOMIC DNA]</scope>
</reference>
<proteinExistence type="evidence at transcript level"/>